<name>CH10_RENSM</name>
<organism>
    <name type="scientific">Renibacterium salmoninarum (strain ATCC 33209 / DSM 20767 / JCM 11484 / NBRC 15589 / NCIMB 2235)</name>
    <dbReference type="NCBI Taxonomy" id="288705"/>
    <lineage>
        <taxon>Bacteria</taxon>
        <taxon>Bacillati</taxon>
        <taxon>Actinomycetota</taxon>
        <taxon>Actinomycetes</taxon>
        <taxon>Micrococcales</taxon>
        <taxon>Micrococcaceae</taxon>
        <taxon>Renibacterium</taxon>
    </lineage>
</organism>
<proteinExistence type="inferred from homology"/>
<feature type="chain" id="PRO_1000082389" description="Co-chaperonin GroES">
    <location>
        <begin position="1"/>
        <end position="98"/>
    </location>
</feature>
<gene>
    <name evidence="1" type="primary">groES</name>
    <name evidence="1" type="synonym">groS</name>
    <name type="ordered locus">RSal33209_1769</name>
</gene>
<sequence>MSVSIKPLEDRIVVRQLDAEQTTASGLVIPDSAKEKPQEGEVVAVGPGRVDDNGNRVPVDVAVGDVVLYSKYGGTEVKTGGEELLVLSARDVLAIVVK</sequence>
<protein>
    <recommendedName>
        <fullName evidence="1">Co-chaperonin GroES</fullName>
    </recommendedName>
    <alternativeName>
        <fullName evidence="1">10 kDa chaperonin</fullName>
    </alternativeName>
    <alternativeName>
        <fullName evidence="1">Chaperonin-10</fullName>
        <shortName evidence="1">Cpn10</shortName>
    </alternativeName>
</protein>
<comment type="function">
    <text evidence="1">Together with the chaperonin GroEL, plays an essential role in assisting protein folding. The GroEL-GroES system forms a nano-cage that allows encapsulation of the non-native substrate proteins and provides a physical environment optimized to promote and accelerate protein folding. GroES binds to the apical surface of the GroEL ring, thereby capping the opening of the GroEL channel.</text>
</comment>
<comment type="subunit">
    <text evidence="1">Heptamer of 7 subunits arranged in a ring. Interacts with the chaperonin GroEL.</text>
</comment>
<comment type="subcellular location">
    <subcellularLocation>
        <location evidence="1">Cytoplasm</location>
    </subcellularLocation>
</comment>
<comment type="similarity">
    <text evidence="1">Belongs to the GroES chaperonin family.</text>
</comment>
<reference key="1">
    <citation type="journal article" date="2008" name="J. Bacteriol.">
        <title>Genome sequence of the fish pathogen Renibacterium salmoninarum suggests reductive evolution away from an environmental Arthrobacter ancestor.</title>
        <authorList>
            <person name="Wiens G.D."/>
            <person name="Rockey D.D."/>
            <person name="Wu Z."/>
            <person name="Chang J."/>
            <person name="Levy R."/>
            <person name="Crane S."/>
            <person name="Chen D.S."/>
            <person name="Capri G.R."/>
            <person name="Burnett J.R."/>
            <person name="Sudheesh P.S."/>
            <person name="Schipma M.J."/>
            <person name="Burd H."/>
            <person name="Bhattacharyya A."/>
            <person name="Rhodes L.D."/>
            <person name="Kaul R."/>
            <person name="Strom M.S."/>
        </authorList>
    </citation>
    <scope>NUCLEOTIDE SEQUENCE [LARGE SCALE GENOMIC DNA]</scope>
    <source>
        <strain>ATCC 33209 / DSM 20767 / JCM 11484 / NBRC 15589 / NCIMB 2235</strain>
    </source>
</reference>
<keyword id="KW-0143">Chaperone</keyword>
<keyword id="KW-0963">Cytoplasm</keyword>
<keyword id="KW-1185">Reference proteome</keyword>
<dbReference type="EMBL" id="CP000910">
    <property type="protein sequence ID" value="ABY23504.1"/>
    <property type="molecule type" value="Genomic_DNA"/>
</dbReference>
<dbReference type="RefSeq" id="WP_012245176.1">
    <property type="nucleotide sequence ID" value="NC_010168.1"/>
</dbReference>
<dbReference type="SMR" id="A9WN15"/>
<dbReference type="STRING" id="288705.RSal33209_1769"/>
<dbReference type="KEGG" id="rsa:RSal33209_1769"/>
<dbReference type="eggNOG" id="COG0234">
    <property type="taxonomic scope" value="Bacteria"/>
</dbReference>
<dbReference type="HOGENOM" id="CLU_132825_2_0_11"/>
<dbReference type="Proteomes" id="UP000002007">
    <property type="component" value="Chromosome"/>
</dbReference>
<dbReference type="GO" id="GO:0005737">
    <property type="term" value="C:cytoplasm"/>
    <property type="evidence" value="ECO:0007669"/>
    <property type="project" value="UniProtKB-SubCell"/>
</dbReference>
<dbReference type="GO" id="GO:0005524">
    <property type="term" value="F:ATP binding"/>
    <property type="evidence" value="ECO:0007669"/>
    <property type="project" value="InterPro"/>
</dbReference>
<dbReference type="GO" id="GO:0046872">
    <property type="term" value="F:metal ion binding"/>
    <property type="evidence" value="ECO:0007669"/>
    <property type="project" value="TreeGrafter"/>
</dbReference>
<dbReference type="GO" id="GO:0044183">
    <property type="term" value="F:protein folding chaperone"/>
    <property type="evidence" value="ECO:0007669"/>
    <property type="project" value="InterPro"/>
</dbReference>
<dbReference type="GO" id="GO:0051087">
    <property type="term" value="F:protein-folding chaperone binding"/>
    <property type="evidence" value="ECO:0007669"/>
    <property type="project" value="TreeGrafter"/>
</dbReference>
<dbReference type="GO" id="GO:0051082">
    <property type="term" value="F:unfolded protein binding"/>
    <property type="evidence" value="ECO:0007669"/>
    <property type="project" value="TreeGrafter"/>
</dbReference>
<dbReference type="GO" id="GO:0051085">
    <property type="term" value="P:chaperone cofactor-dependent protein refolding"/>
    <property type="evidence" value="ECO:0007669"/>
    <property type="project" value="TreeGrafter"/>
</dbReference>
<dbReference type="CDD" id="cd00320">
    <property type="entry name" value="cpn10"/>
    <property type="match status" value="1"/>
</dbReference>
<dbReference type="FunFam" id="2.30.33.40:FF:000001">
    <property type="entry name" value="10 kDa chaperonin"/>
    <property type="match status" value="1"/>
</dbReference>
<dbReference type="Gene3D" id="2.30.33.40">
    <property type="entry name" value="GroES chaperonin"/>
    <property type="match status" value="1"/>
</dbReference>
<dbReference type="HAMAP" id="MF_00580">
    <property type="entry name" value="CH10"/>
    <property type="match status" value="1"/>
</dbReference>
<dbReference type="InterPro" id="IPR020818">
    <property type="entry name" value="Chaperonin_GroES"/>
</dbReference>
<dbReference type="InterPro" id="IPR037124">
    <property type="entry name" value="Chaperonin_GroES_sf"/>
</dbReference>
<dbReference type="InterPro" id="IPR018369">
    <property type="entry name" value="Chaprnonin_Cpn10_CS"/>
</dbReference>
<dbReference type="InterPro" id="IPR011032">
    <property type="entry name" value="GroES-like_sf"/>
</dbReference>
<dbReference type="NCBIfam" id="NF001527">
    <property type="entry name" value="PRK00364.1-2"/>
    <property type="match status" value="1"/>
</dbReference>
<dbReference type="NCBIfam" id="NF001530">
    <property type="entry name" value="PRK00364.1-6"/>
    <property type="match status" value="1"/>
</dbReference>
<dbReference type="NCBIfam" id="NF001531">
    <property type="entry name" value="PRK00364.2-2"/>
    <property type="match status" value="1"/>
</dbReference>
<dbReference type="NCBIfam" id="NF001533">
    <property type="entry name" value="PRK00364.2-4"/>
    <property type="match status" value="1"/>
</dbReference>
<dbReference type="NCBIfam" id="NF001534">
    <property type="entry name" value="PRK00364.2-5"/>
    <property type="match status" value="1"/>
</dbReference>
<dbReference type="PANTHER" id="PTHR10772">
    <property type="entry name" value="10 KDA HEAT SHOCK PROTEIN"/>
    <property type="match status" value="1"/>
</dbReference>
<dbReference type="PANTHER" id="PTHR10772:SF58">
    <property type="entry name" value="CO-CHAPERONIN GROES"/>
    <property type="match status" value="1"/>
</dbReference>
<dbReference type="Pfam" id="PF00166">
    <property type="entry name" value="Cpn10"/>
    <property type="match status" value="1"/>
</dbReference>
<dbReference type="PRINTS" id="PR00297">
    <property type="entry name" value="CHAPERONIN10"/>
</dbReference>
<dbReference type="SMART" id="SM00883">
    <property type="entry name" value="Cpn10"/>
    <property type="match status" value="1"/>
</dbReference>
<dbReference type="SUPFAM" id="SSF50129">
    <property type="entry name" value="GroES-like"/>
    <property type="match status" value="1"/>
</dbReference>
<dbReference type="PROSITE" id="PS00681">
    <property type="entry name" value="CHAPERONINS_CPN10"/>
    <property type="match status" value="1"/>
</dbReference>
<evidence type="ECO:0000255" key="1">
    <source>
        <dbReference type="HAMAP-Rule" id="MF_00580"/>
    </source>
</evidence>
<accession>A9WN15</accession>